<gene>
    <name evidence="1" type="primary">cbpA</name>
    <name type="ordered locus">SNSL254_A1207</name>
</gene>
<organism>
    <name type="scientific">Salmonella newport (strain SL254)</name>
    <dbReference type="NCBI Taxonomy" id="423368"/>
    <lineage>
        <taxon>Bacteria</taxon>
        <taxon>Pseudomonadati</taxon>
        <taxon>Pseudomonadota</taxon>
        <taxon>Gammaproteobacteria</taxon>
        <taxon>Enterobacterales</taxon>
        <taxon>Enterobacteriaceae</taxon>
        <taxon>Salmonella</taxon>
    </lineage>
</organism>
<protein>
    <recommendedName>
        <fullName evidence="1">Curved DNA-binding protein</fullName>
    </recommendedName>
</protein>
<dbReference type="EMBL" id="CP001113">
    <property type="protein sequence ID" value="ACF61693.1"/>
    <property type="molecule type" value="Genomic_DNA"/>
</dbReference>
<dbReference type="RefSeq" id="WP_000420603.1">
    <property type="nucleotide sequence ID" value="NZ_CCMR01000003.1"/>
</dbReference>
<dbReference type="SMR" id="B4T2U5"/>
<dbReference type="KEGG" id="see:SNSL254_A1207"/>
<dbReference type="HOGENOM" id="CLU_017633_0_0_6"/>
<dbReference type="Proteomes" id="UP000008824">
    <property type="component" value="Chromosome"/>
</dbReference>
<dbReference type="GO" id="GO:0005737">
    <property type="term" value="C:cytoplasm"/>
    <property type="evidence" value="ECO:0007669"/>
    <property type="project" value="UniProtKB-UniRule"/>
</dbReference>
<dbReference type="GO" id="GO:0009295">
    <property type="term" value="C:nucleoid"/>
    <property type="evidence" value="ECO:0007669"/>
    <property type="project" value="UniProtKB-SubCell"/>
</dbReference>
<dbReference type="GO" id="GO:0003681">
    <property type="term" value="F:bent DNA binding"/>
    <property type="evidence" value="ECO:0007669"/>
    <property type="project" value="UniProtKB-UniRule"/>
</dbReference>
<dbReference type="GO" id="GO:0051082">
    <property type="term" value="F:unfolded protein binding"/>
    <property type="evidence" value="ECO:0007669"/>
    <property type="project" value="InterPro"/>
</dbReference>
<dbReference type="GO" id="GO:0051085">
    <property type="term" value="P:chaperone cofactor-dependent protein refolding"/>
    <property type="evidence" value="ECO:0007669"/>
    <property type="project" value="TreeGrafter"/>
</dbReference>
<dbReference type="GO" id="GO:0042026">
    <property type="term" value="P:protein refolding"/>
    <property type="evidence" value="ECO:0007669"/>
    <property type="project" value="TreeGrafter"/>
</dbReference>
<dbReference type="CDD" id="cd06257">
    <property type="entry name" value="DnaJ"/>
    <property type="match status" value="1"/>
</dbReference>
<dbReference type="CDD" id="cd10747">
    <property type="entry name" value="DnaJ_C"/>
    <property type="match status" value="1"/>
</dbReference>
<dbReference type="FunFam" id="1.10.287.110:FF:000013">
    <property type="entry name" value="Curved DNA-binding protein"/>
    <property type="match status" value="1"/>
</dbReference>
<dbReference type="FunFam" id="2.60.260.20:FF:000008">
    <property type="entry name" value="Curved DNA-binding protein"/>
    <property type="match status" value="1"/>
</dbReference>
<dbReference type="Gene3D" id="1.10.287.110">
    <property type="entry name" value="DnaJ domain"/>
    <property type="match status" value="1"/>
</dbReference>
<dbReference type="Gene3D" id="1.20.5.460">
    <property type="entry name" value="Single helix bin"/>
    <property type="match status" value="1"/>
</dbReference>
<dbReference type="Gene3D" id="2.60.260.20">
    <property type="entry name" value="Urease metallochaperone UreE, N-terminal domain"/>
    <property type="match status" value="2"/>
</dbReference>
<dbReference type="HAMAP" id="MF_01154">
    <property type="entry name" value="CbpA"/>
    <property type="match status" value="1"/>
</dbReference>
<dbReference type="InterPro" id="IPR023859">
    <property type="entry name" value="DNA-bd_curved-DNA"/>
</dbReference>
<dbReference type="InterPro" id="IPR002939">
    <property type="entry name" value="DnaJ_C"/>
</dbReference>
<dbReference type="InterPro" id="IPR001623">
    <property type="entry name" value="DnaJ_domain"/>
</dbReference>
<dbReference type="InterPro" id="IPR018253">
    <property type="entry name" value="DnaJ_domain_CS"/>
</dbReference>
<dbReference type="InterPro" id="IPR008971">
    <property type="entry name" value="HSP40/DnaJ_pept-bd"/>
</dbReference>
<dbReference type="InterPro" id="IPR036869">
    <property type="entry name" value="J_dom_sf"/>
</dbReference>
<dbReference type="NCBIfam" id="NF007618">
    <property type="entry name" value="PRK10266.1"/>
    <property type="match status" value="1"/>
</dbReference>
<dbReference type="PANTHER" id="PTHR43096">
    <property type="entry name" value="DNAJ HOMOLOG 1, MITOCHONDRIAL-RELATED"/>
    <property type="match status" value="1"/>
</dbReference>
<dbReference type="PANTHER" id="PTHR43096:SF52">
    <property type="entry name" value="DNAJ HOMOLOG 1, MITOCHONDRIAL-RELATED"/>
    <property type="match status" value="1"/>
</dbReference>
<dbReference type="Pfam" id="PF00226">
    <property type="entry name" value="DnaJ"/>
    <property type="match status" value="1"/>
</dbReference>
<dbReference type="Pfam" id="PF01556">
    <property type="entry name" value="DnaJ_C"/>
    <property type="match status" value="1"/>
</dbReference>
<dbReference type="PRINTS" id="PR00625">
    <property type="entry name" value="JDOMAIN"/>
</dbReference>
<dbReference type="SMART" id="SM00271">
    <property type="entry name" value="DnaJ"/>
    <property type="match status" value="1"/>
</dbReference>
<dbReference type="SUPFAM" id="SSF46565">
    <property type="entry name" value="Chaperone J-domain"/>
    <property type="match status" value="1"/>
</dbReference>
<dbReference type="SUPFAM" id="SSF49493">
    <property type="entry name" value="HSP40/DnaJ peptide-binding domain"/>
    <property type="match status" value="2"/>
</dbReference>
<dbReference type="PROSITE" id="PS00636">
    <property type="entry name" value="DNAJ_1"/>
    <property type="match status" value="1"/>
</dbReference>
<dbReference type="PROSITE" id="PS50076">
    <property type="entry name" value="DNAJ_2"/>
    <property type="match status" value="1"/>
</dbReference>
<evidence type="ECO:0000255" key="1">
    <source>
        <dbReference type="HAMAP-Rule" id="MF_01154"/>
    </source>
</evidence>
<reference key="1">
    <citation type="journal article" date="2011" name="J. Bacteriol.">
        <title>Comparative genomics of 28 Salmonella enterica isolates: evidence for CRISPR-mediated adaptive sublineage evolution.</title>
        <authorList>
            <person name="Fricke W.F."/>
            <person name="Mammel M.K."/>
            <person name="McDermott P.F."/>
            <person name="Tartera C."/>
            <person name="White D.G."/>
            <person name="Leclerc J.E."/>
            <person name="Ravel J."/>
            <person name="Cebula T.A."/>
        </authorList>
    </citation>
    <scope>NUCLEOTIDE SEQUENCE [LARGE SCALE GENOMIC DNA]</scope>
    <source>
        <strain>SL254</strain>
    </source>
</reference>
<name>CBPA_SALNS</name>
<proteinExistence type="inferred from homology"/>
<feature type="chain" id="PRO_1000137760" description="Curved DNA-binding protein">
    <location>
        <begin position="1"/>
        <end position="306"/>
    </location>
</feature>
<feature type="domain" description="J" evidence="1">
    <location>
        <begin position="5"/>
        <end position="69"/>
    </location>
</feature>
<comment type="function">
    <text evidence="1">DNA-binding protein that preferentially recognizes a curved DNA sequence. It is probably a functional analog of DnaJ; displays overlapping activities with DnaJ, but functions under different conditions, probably acting as a molecular chaperone in an adaptive response to environmental stresses other than heat shock. Lacks autonomous chaperone activity; binds native substrates and targets them for recognition by DnaK. Its activity is inhibited by the binding of CbpM.</text>
</comment>
<comment type="subcellular location">
    <subcellularLocation>
        <location evidence="1">Cytoplasm</location>
        <location evidence="1">Nucleoid</location>
    </subcellularLocation>
</comment>
<sequence>MELKDYYAIMGVKPTDDLKTIKTAYRRLARKYHPDVSKEPDAEARFKEVAEAWEVLSDEQRRAEYDQLWQHRNDPQFNRQFQQHEGQPYNAEDFDDIFSSIFGQHGRHSHHRHAARGHDIEIEVAVFLEETLEEHQRTISYSVPVYNAFGLVEREIPKTLNVKIPAGVSNGQRIRLKGQGTPGENGGPNGDLWLVIHIAPHPLFDIVNQDLEVVLPLAPWEAALGAKVSVPTLKERILLTIPPGSQAGQRLRIKGKGLASKKHTGDLYAIIKIVMPPKPDEKTAALWQQLADAQSSFDPRQQWGKA</sequence>
<accession>B4T2U5</accession>
<keyword id="KW-0143">Chaperone</keyword>
<keyword id="KW-0963">Cytoplasm</keyword>
<keyword id="KW-0238">DNA-binding</keyword>